<gene>
    <name type="primary">Nhsl3</name>
    <name type="synonym">Kiaa1522</name>
</gene>
<evidence type="ECO:0000250" key="1">
    <source>
        <dbReference type="UniProtKB" id="Q9P206"/>
    </source>
</evidence>
<evidence type="ECO:0000256" key="2">
    <source>
        <dbReference type="SAM" id="MobiDB-lite"/>
    </source>
</evidence>
<evidence type="ECO:0000303" key="3">
    <source>
    </source>
</evidence>
<evidence type="ECO:0000303" key="4">
    <source>
    </source>
</evidence>
<evidence type="ECO:0000305" key="5"/>
<evidence type="ECO:0007744" key="6">
    <source>
    </source>
</evidence>
<evidence type="ECO:0007744" key="7">
    <source>
    </source>
</evidence>
<evidence type="ECO:0007744" key="8">
    <source>
    </source>
</evidence>
<evidence type="ECO:0007744" key="9">
    <source>
    </source>
</evidence>
<protein>
    <recommendedName>
        <fullName>NHS-like protein 3</fullName>
    </recommendedName>
</protein>
<comment type="function">
    <text evidence="1">Able to directly activate the TNF-NFkappaB signaling pathway.</text>
</comment>
<comment type="alternative products">
    <event type="alternative splicing"/>
    <isoform>
        <id>A2A7S8-1</id>
        <name>1</name>
        <sequence type="displayed"/>
    </isoform>
    <isoform>
        <id>A2A7S8-2</id>
        <name>2</name>
        <sequence type="described" ref="VSP_029460"/>
    </isoform>
    <isoform>
        <id>A2A7S8-3</id>
        <name>3</name>
        <sequence type="described" ref="VSP_029459"/>
    </isoform>
    <isoform>
        <id>A2A7S8-4</id>
        <name>4</name>
        <sequence type="described" ref="VSP_029461"/>
    </isoform>
</comment>
<comment type="sequence caution" evidence="5">
    <conflict type="erroneous initiation">
        <sequence resource="EMBL-CDS" id="BAC98192"/>
    </conflict>
    <text>Extended N-terminus.</text>
</comment>
<reference key="1">
    <citation type="journal article" date="2003" name="DNA Res.">
        <title>Prediction of the coding sequences of mouse homologues of KIAA gene: III. The complete nucleotide sequences of 500 mouse KIAA-homologous cDNAs identified by screening of terminal sequences of cDNA clones randomly sampled from size-fractionated libraries.</title>
        <authorList>
            <person name="Okazaki N."/>
            <person name="Kikuno R."/>
            <person name="Ohara R."/>
            <person name="Inamoto S."/>
            <person name="Koseki H."/>
            <person name="Hiraoka S."/>
            <person name="Saga Y."/>
            <person name="Nagase T."/>
            <person name="Ohara O."/>
            <person name="Koga H."/>
        </authorList>
    </citation>
    <scope>NUCLEOTIDE SEQUENCE [LARGE SCALE MRNA] (ISOFORM 4)</scope>
    <source>
        <tissue>Embryonic tail</tissue>
    </source>
</reference>
<reference key="2">
    <citation type="journal article" date="2005" name="Science">
        <title>The transcriptional landscape of the mammalian genome.</title>
        <authorList>
            <person name="Carninci P."/>
            <person name="Kasukawa T."/>
            <person name="Katayama S."/>
            <person name="Gough J."/>
            <person name="Frith M.C."/>
            <person name="Maeda N."/>
            <person name="Oyama R."/>
            <person name="Ravasi T."/>
            <person name="Lenhard B."/>
            <person name="Wells C."/>
            <person name="Kodzius R."/>
            <person name="Shimokawa K."/>
            <person name="Bajic V.B."/>
            <person name="Brenner S.E."/>
            <person name="Batalov S."/>
            <person name="Forrest A.R."/>
            <person name="Zavolan M."/>
            <person name="Davis M.J."/>
            <person name="Wilming L.G."/>
            <person name="Aidinis V."/>
            <person name="Allen J.E."/>
            <person name="Ambesi-Impiombato A."/>
            <person name="Apweiler R."/>
            <person name="Aturaliya R.N."/>
            <person name="Bailey T.L."/>
            <person name="Bansal M."/>
            <person name="Baxter L."/>
            <person name="Beisel K.W."/>
            <person name="Bersano T."/>
            <person name="Bono H."/>
            <person name="Chalk A.M."/>
            <person name="Chiu K.P."/>
            <person name="Choudhary V."/>
            <person name="Christoffels A."/>
            <person name="Clutterbuck D.R."/>
            <person name="Crowe M.L."/>
            <person name="Dalla E."/>
            <person name="Dalrymple B.P."/>
            <person name="de Bono B."/>
            <person name="Della Gatta G."/>
            <person name="di Bernardo D."/>
            <person name="Down T."/>
            <person name="Engstrom P."/>
            <person name="Fagiolini M."/>
            <person name="Faulkner G."/>
            <person name="Fletcher C.F."/>
            <person name="Fukushima T."/>
            <person name="Furuno M."/>
            <person name="Futaki S."/>
            <person name="Gariboldi M."/>
            <person name="Georgii-Hemming P."/>
            <person name="Gingeras T.R."/>
            <person name="Gojobori T."/>
            <person name="Green R.E."/>
            <person name="Gustincich S."/>
            <person name="Harbers M."/>
            <person name="Hayashi Y."/>
            <person name="Hensch T.K."/>
            <person name="Hirokawa N."/>
            <person name="Hill D."/>
            <person name="Huminiecki L."/>
            <person name="Iacono M."/>
            <person name="Ikeo K."/>
            <person name="Iwama A."/>
            <person name="Ishikawa T."/>
            <person name="Jakt M."/>
            <person name="Kanapin A."/>
            <person name="Katoh M."/>
            <person name="Kawasawa Y."/>
            <person name="Kelso J."/>
            <person name="Kitamura H."/>
            <person name="Kitano H."/>
            <person name="Kollias G."/>
            <person name="Krishnan S.P."/>
            <person name="Kruger A."/>
            <person name="Kummerfeld S.K."/>
            <person name="Kurochkin I.V."/>
            <person name="Lareau L.F."/>
            <person name="Lazarevic D."/>
            <person name="Lipovich L."/>
            <person name="Liu J."/>
            <person name="Liuni S."/>
            <person name="McWilliam S."/>
            <person name="Madan Babu M."/>
            <person name="Madera M."/>
            <person name="Marchionni L."/>
            <person name="Matsuda H."/>
            <person name="Matsuzawa S."/>
            <person name="Miki H."/>
            <person name="Mignone F."/>
            <person name="Miyake S."/>
            <person name="Morris K."/>
            <person name="Mottagui-Tabar S."/>
            <person name="Mulder N."/>
            <person name="Nakano N."/>
            <person name="Nakauchi H."/>
            <person name="Ng P."/>
            <person name="Nilsson R."/>
            <person name="Nishiguchi S."/>
            <person name="Nishikawa S."/>
            <person name="Nori F."/>
            <person name="Ohara O."/>
            <person name="Okazaki Y."/>
            <person name="Orlando V."/>
            <person name="Pang K.C."/>
            <person name="Pavan W.J."/>
            <person name="Pavesi G."/>
            <person name="Pesole G."/>
            <person name="Petrovsky N."/>
            <person name="Piazza S."/>
            <person name="Reed J."/>
            <person name="Reid J.F."/>
            <person name="Ring B.Z."/>
            <person name="Ringwald M."/>
            <person name="Rost B."/>
            <person name="Ruan Y."/>
            <person name="Salzberg S.L."/>
            <person name="Sandelin A."/>
            <person name="Schneider C."/>
            <person name="Schoenbach C."/>
            <person name="Sekiguchi K."/>
            <person name="Semple C.A."/>
            <person name="Seno S."/>
            <person name="Sessa L."/>
            <person name="Sheng Y."/>
            <person name="Shibata Y."/>
            <person name="Shimada H."/>
            <person name="Shimada K."/>
            <person name="Silva D."/>
            <person name="Sinclair B."/>
            <person name="Sperling S."/>
            <person name="Stupka E."/>
            <person name="Sugiura K."/>
            <person name="Sultana R."/>
            <person name="Takenaka Y."/>
            <person name="Taki K."/>
            <person name="Tammoja K."/>
            <person name="Tan S.L."/>
            <person name="Tang S."/>
            <person name="Taylor M.S."/>
            <person name="Tegner J."/>
            <person name="Teichmann S.A."/>
            <person name="Ueda H.R."/>
            <person name="van Nimwegen E."/>
            <person name="Verardo R."/>
            <person name="Wei C.L."/>
            <person name="Yagi K."/>
            <person name="Yamanishi H."/>
            <person name="Zabarovsky E."/>
            <person name="Zhu S."/>
            <person name="Zimmer A."/>
            <person name="Hide W."/>
            <person name="Bult C."/>
            <person name="Grimmond S.M."/>
            <person name="Teasdale R.D."/>
            <person name="Liu E.T."/>
            <person name="Brusic V."/>
            <person name="Quackenbush J."/>
            <person name="Wahlestedt C."/>
            <person name="Mattick J.S."/>
            <person name="Hume D.A."/>
            <person name="Kai C."/>
            <person name="Sasaki D."/>
            <person name="Tomaru Y."/>
            <person name="Fukuda S."/>
            <person name="Kanamori-Katayama M."/>
            <person name="Suzuki M."/>
            <person name="Aoki J."/>
            <person name="Arakawa T."/>
            <person name="Iida J."/>
            <person name="Imamura K."/>
            <person name="Itoh M."/>
            <person name="Kato T."/>
            <person name="Kawaji H."/>
            <person name="Kawagashira N."/>
            <person name="Kawashima T."/>
            <person name="Kojima M."/>
            <person name="Kondo S."/>
            <person name="Konno H."/>
            <person name="Nakano K."/>
            <person name="Ninomiya N."/>
            <person name="Nishio T."/>
            <person name="Okada M."/>
            <person name="Plessy C."/>
            <person name="Shibata K."/>
            <person name="Shiraki T."/>
            <person name="Suzuki S."/>
            <person name="Tagami M."/>
            <person name="Waki K."/>
            <person name="Watahiki A."/>
            <person name="Okamura-Oho Y."/>
            <person name="Suzuki H."/>
            <person name="Kawai J."/>
            <person name="Hayashizaki Y."/>
        </authorList>
    </citation>
    <scope>NUCLEOTIDE SEQUENCE [LARGE SCALE MRNA] (ISOFORMS 1; 2 AND 3)</scope>
    <source>
        <strain>C57BL/6J</strain>
        <strain>NOD</strain>
        <tissue>Thymus</tissue>
    </source>
</reference>
<reference key="3">
    <citation type="journal article" date="2009" name="PLoS Biol.">
        <title>Lineage-specific biology revealed by a finished genome assembly of the mouse.</title>
        <authorList>
            <person name="Church D.M."/>
            <person name="Goodstadt L."/>
            <person name="Hillier L.W."/>
            <person name="Zody M.C."/>
            <person name="Goldstein S."/>
            <person name="She X."/>
            <person name="Bult C.J."/>
            <person name="Agarwala R."/>
            <person name="Cherry J.L."/>
            <person name="DiCuccio M."/>
            <person name="Hlavina W."/>
            <person name="Kapustin Y."/>
            <person name="Meric P."/>
            <person name="Maglott D."/>
            <person name="Birtle Z."/>
            <person name="Marques A.C."/>
            <person name="Graves T."/>
            <person name="Zhou S."/>
            <person name="Teague B."/>
            <person name="Potamousis K."/>
            <person name="Churas C."/>
            <person name="Place M."/>
            <person name="Herschleb J."/>
            <person name="Runnheim R."/>
            <person name="Forrest D."/>
            <person name="Amos-Landgraf J."/>
            <person name="Schwartz D.C."/>
            <person name="Cheng Z."/>
            <person name="Lindblad-Toh K."/>
            <person name="Eichler E.E."/>
            <person name="Ponting C.P."/>
        </authorList>
    </citation>
    <scope>NUCLEOTIDE SEQUENCE [LARGE SCALE GENOMIC DNA]</scope>
    <source>
        <strain>C57BL/6J</strain>
    </source>
</reference>
<reference key="4">
    <citation type="journal article" date="2004" name="Genome Res.">
        <title>The status, quality, and expansion of the NIH full-length cDNA project: the Mammalian Gene Collection (MGC).</title>
        <authorList>
            <consortium name="The MGC Project Team"/>
        </authorList>
    </citation>
    <scope>NUCLEOTIDE SEQUENCE [LARGE SCALE MRNA] OF 817-1013</scope>
    <source>
        <strain>FVB/N</strain>
        <tissue>Colon</tissue>
    </source>
</reference>
<reference key="5">
    <citation type="journal article" date="2006" name="Mol. Cell. Proteomics">
        <title>Comprehensive identification of phosphorylation sites in postsynaptic density preparations.</title>
        <authorList>
            <person name="Trinidad J.C."/>
            <person name="Specht C.G."/>
            <person name="Thalhammer A."/>
            <person name="Schoepfer R."/>
            <person name="Burlingame A.L."/>
        </authorList>
    </citation>
    <scope>IDENTIFICATION BY MASS SPECTROMETRY [LARGE SCALE ANALYSIS]</scope>
    <source>
        <tissue>Brain</tissue>
    </source>
</reference>
<reference key="6">
    <citation type="journal article" date="2007" name="J. Immunol.">
        <title>Quantitative time-resolved phosphoproteomic analysis of mast cell signaling.</title>
        <authorList>
            <person name="Cao L."/>
            <person name="Yu K."/>
            <person name="Banh C."/>
            <person name="Nguyen V."/>
            <person name="Ritz A."/>
            <person name="Raphael B.J."/>
            <person name="Kawakami Y."/>
            <person name="Kawakami T."/>
            <person name="Salomon A.R."/>
        </authorList>
    </citation>
    <scope>PHOSPHORYLATION [LARGE SCALE ANALYSIS] AT TYR-108</scope>
    <scope>IDENTIFICATION BY MASS SPECTROMETRY [LARGE SCALE ANALYSIS]</scope>
    <source>
        <tissue>Mast cell</tissue>
    </source>
</reference>
<reference key="7">
    <citation type="journal article" date="2007" name="Proc. Natl. Acad. Sci. U.S.A.">
        <title>Large-scale phosphorylation analysis of mouse liver.</title>
        <authorList>
            <person name="Villen J."/>
            <person name="Beausoleil S.A."/>
            <person name="Gerber S.A."/>
            <person name="Gygi S.P."/>
        </authorList>
    </citation>
    <scope>IDENTIFICATION BY MASS SPECTROMETRY [LARGE SCALE ANALYSIS]</scope>
    <source>
        <tissue>Liver</tissue>
    </source>
</reference>
<reference key="8">
    <citation type="journal article" date="2009" name="Immunity">
        <title>The phagosomal proteome in interferon-gamma-activated macrophages.</title>
        <authorList>
            <person name="Trost M."/>
            <person name="English L."/>
            <person name="Lemieux S."/>
            <person name="Courcelles M."/>
            <person name="Desjardins M."/>
            <person name="Thibault P."/>
        </authorList>
    </citation>
    <scope>PHOSPHORYLATION [LARGE SCALE ANALYSIS] AT SER-402; SER-610 AND SER-909</scope>
    <scope>PHOSPHORYLATION [LARGE SCALE ANALYSIS] AT SER-17 (ISOFORM 2)</scope>
    <scope>IDENTIFICATION BY MASS SPECTROMETRY [LARGE SCALE ANALYSIS]</scope>
</reference>
<reference key="9">
    <citation type="journal article" date="2010" name="Cell">
        <title>A tissue-specific atlas of mouse protein phosphorylation and expression.</title>
        <authorList>
            <person name="Huttlin E.L."/>
            <person name="Jedrychowski M.P."/>
            <person name="Elias J.E."/>
            <person name="Goswami T."/>
            <person name="Rad R."/>
            <person name="Beausoleil S.A."/>
            <person name="Villen J."/>
            <person name="Haas W."/>
            <person name="Sowa M.E."/>
            <person name="Gygi S.P."/>
        </authorList>
    </citation>
    <scope>PHOSPHORYLATION [LARGE SCALE ANALYSIS] AT SER-92; SER-213; SER-325; SER-328; SER-402; SER-407; THR-529; SER-543; SER-838; SER-842; SER-909; SER-952 AND SER-959</scope>
    <scope>PHOSPHORYLATION [LARGE SCALE ANALYSIS] AT SER-17 (ISOFORM 2)</scope>
    <scope>IDENTIFICATION BY MASS SPECTROMETRY [LARGE SCALE ANALYSIS]</scope>
    <source>
        <tissue>Brain</tissue>
        <tissue>Brown adipose tissue</tissue>
        <tissue>Kidney</tissue>
        <tissue>Liver</tissue>
        <tissue>Lung</tissue>
        <tissue>Pancreas</tissue>
    </source>
</reference>
<reference key="10">
    <citation type="journal article" date="2014" name="Mol. Cell. Proteomics">
        <title>Immunoaffinity enrichment and mass spectrometry analysis of protein methylation.</title>
        <authorList>
            <person name="Guo A."/>
            <person name="Gu H."/>
            <person name="Zhou J."/>
            <person name="Mulhern D."/>
            <person name="Wang Y."/>
            <person name="Lee K.A."/>
            <person name="Yang V."/>
            <person name="Aguiar M."/>
            <person name="Kornhauser J."/>
            <person name="Jia X."/>
            <person name="Ren J."/>
            <person name="Beausoleil S.A."/>
            <person name="Silva J.C."/>
            <person name="Vemulapalli V."/>
            <person name="Bedford M.T."/>
            <person name="Comb M.J."/>
        </authorList>
    </citation>
    <scope>METHYLATION [LARGE SCALE ANALYSIS] AT ARG-318</scope>
    <scope>IDENTIFICATION BY MASS SPECTROMETRY [LARGE SCALE ANALYSIS]</scope>
    <source>
        <tissue>Brain</tissue>
    </source>
</reference>
<dbReference type="EMBL" id="AK129382">
    <property type="protein sequence ID" value="BAC98192.1"/>
    <property type="status" value="ALT_INIT"/>
    <property type="molecule type" value="mRNA"/>
</dbReference>
<dbReference type="EMBL" id="AK038020">
    <property type="protein sequence ID" value="BAE20526.1"/>
    <property type="molecule type" value="mRNA"/>
</dbReference>
<dbReference type="EMBL" id="AK154456">
    <property type="protein sequence ID" value="BAE32598.1"/>
    <property type="molecule type" value="mRNA"/>
</dbReference>
<dbReference type="EMBL" id="AK154932">
    <property type="protein sequence ID" value="BAE32933.1"/>
    <property type="molecule type" value="mRNA"/>
</dbReference>
<dbReference type="EMBL" id="AL606977">
    <property type="status" value="NOT_ANNOTATED_CDS"/>
    <property type="molecule type" value="Genomic_DNA"/>
</dbReference>
<dbReference type="EMBL" id="BC031163">
    <property type="protein sequence ID" value="AAH31163.1"/>
    <property type="molecule type" value="mRNA"/>
</dbReference>
<dbReference type="CCDS" id="CCDS18686.1">
    <molecule id="A2A7S8-2"/>
</dbReference>
<dbReference type="CCDS" id="CCDS71474.1">
    <molecule id="A2A7S8-1"/>
</dbReference>
<dbReference type="CCDS" id="CCDS71475.1">
    <molecule id="A2A7S8-4"/>
</dbReference>
<dbReference type="RefSeq" id="NP_001028361.1">
    <molecule id="A2A7S8-2"/>
    <property type="nucleotide sequence ID" value="NM_001033189.4"/>
</dbReference>
<dbReference type="RefSeq" id="NP_001272794.1">
    <molecule id="A2A7S8-4"/>
    <property type="nucleotide sequence ID" value="NM_001285865.2"/>
</dbReference>
<dbReference type="RefSeq" id="NP_001272795.1">
    <molecule id="A2A7S8-1"/>
    <property type="nucleotide sequence ID" value="NM_001285866.2"/>
</dbReference>
<dbReference type="RefSeq" id="NP_001272796.1">
    <molecule id="A2A7S8-3"/>
    <property type="nucleotide sequence ID" value="NM_001285867.2"/>
</dbReference>
<dbReference type="BioGRID" id="220616">
    <property type="interactions" value="2"/>
</dbReference>
<dbReference type="FunCoup" id="A2A7S8">
    <property type="interactions" value="88"/>
</dbReference>
<dbReference type="IntAct" id="A2A7S8">
    <property type="interactions" value="1"/>
</dbReference>
<dbReference type="MINT" id="A2A7S8"/>
<dbReference type="STRING" id="10090.ENSMUSP00000062395"/>
<dbReference type="GlyGen" id="A2A7S8">
    <property type="glycosylation" value="2 sites, 1 O-linked glycan (1 site)"/>
</dbReference>
<dbReference type="iPTMnet" id="A2A7S8"/>
<dbReference type="PhosphoSitePlus" id="A2A7S8"/>
<dbReference type="jPOST" id="A2A7S8"/>
<dbReference type="PaxDb" id="10090-ENSMUSP00000062395"/>
<dbReference type="ProteomicsDB" id="268924">
    <molecule id="A2A7S8-1"/>
</dbReference>
<dbReference type="ProteomicsDB" id="268925">
    <molecule id="A2A7S8-2"/>
</dbReference>
<dbReference type="ProteomicsDB" id="268926">
    <molecule id="A2A7S8-3"/>
</dbReference>
<dbReference type="ProteomicsDB" id="268927">
    <molecule id="A2A7S8-4"/>
</dbReference>
<dbReference type="Antibodypedia" id="31358">
    <property type="antibodies" value="43 antibodies from 12 providers"/>
</dbReference>
<dbReference type="Ensembl" id="ENSMUST00000052602.6">
    <molecule id="A2A7S8-2"/>
    <property type="protein sequence ID" value="ENSMUSP00000062395.6"/>
    <property type="gene ID" value="ENSMUSG00000050390.13"/>
</dbReference>
<dbReference type="Ensembl" id="ENSMUST00000097873.10">
    <molecule id="A2A7S8-4"/>
    <property type="protein sequence ID" value="ENSMUSP00000095483.4"/>
    <property type="gene ID" value="ENSMUSG00000050390.13"/>
</dbReference>
<dbReference type="Ensembl" id="ENSMUST00000106051.8">
    <molecule id="A2A7S8-1"/>
    <property type="protein sequence ID" value="ENSMUSP00000101666.2"/>
    <property type="gene ID" value="ENSMUSG00000050390.13"/>
</dbReference>
<dbReference type="GeneID" id="97130"/>
<dbReference type="KEGG" id="mmu:97130"/>
<dbReference type="UCSC" id="uc008uwl.2">
    <molecule id="A2A7S8-1"/>
    <property type="organism name" value="mouse"/>
</dbReference>
<dbReference type="UCSC" id="uc008uwm.2">
    <molecule id="A2A7S8-4"/>
    <property type="organism name" value="mouse"/>
</dbReference>
<dbReference type="UCSC" id="uc008uwn.1">
    <molecule id="A2A7S8-2"/>
    <property type="organism name" value="mouse"/>
</dbReference>
<dbReference type="AGR" id="MGI:2140651"/>
<dbReference type="CTD" id="57648"/>
<dbReference type="MGI" id="MGI:2140651">
    <property type="gene designation" value="Nhsl3"/>
</dbReference>
<dbReference type="VEuPathDB" id="HostDB:ENSMUSG00000050390"/>
<dbReference type="eggNOG" id="ENOG502QV6M">
    <property type="taxonomic scope" value="Eukaryota"/>
</dbReference>
<dbReference type="GeneTree" id="ENSGT00950000182963"/>
<dbReference type="HOGENOM" id="CLU_004158_0_0_1"/>
<dbReference type="InParanoid" id="A2A7S8"/>
<dbReference type="OMA" id="PAMGNSH"/>
<dbReference type="OrthoDB" id="90980at9989"/>
<dbReference type="PhylomeDB" id="A2A7S8"/>
<dbReference type="TreeFam" id="TF333323"/>
<dbReference type="BioGRID-ORCS" id="97130">
    <property type="hits" value="1 hit in 76 CRISPR screens"/>
</dbReference>
<dbReference type="CD-CODE" id="CE726F99">
    <property type="entry name" value="Postsynaptic density"/>
</dbReference>
<dbReference type="ChiTaRS" id="C77080">
    <property type="organism name" value="mouse"/>
</dbReference>
<dbReference type="PRO" id="PR:A2A7S8"/>
<dbReference type="Proteomes" id="UP000000589">
    <property type="component" value="Chromosome 4"/>
</dbReference>
<dbReference type="RNAct" id="A2A7S8">
    <property type="molecule type" value="protein"/>
</dbReference>
<dbReference type="Bgee" id="ENSMUSG00000050390">
    <property type="expression patterns" value="Expressed in lacrimal gland and 168 other cell types or tissues"/>
</dbReference>
<dbReference type="ExpressionAtlas" id="A2A7S8">
    <property type="expression patterns" value="baseline and differential"/>
</dbReference>
<dbReference type="InterPro" id="IPR024845">
    <property type="entry name" value="NHS-like"/>
</dbReference>
<dbReference type="PANTHER" id="PTHR23039">
    <property type="entry name" value="NANCE-HORAN SYNDROME PROTEIN"/>
    <property type="match status" value="1"/>
</dbReference>
<dbReference type="PANTHER" id="PTHR23039:SF6">
    <property type="entry name" value="SIMILAR TO MKIAA1522 PROTEIN"/>
    <property type="match status" value="1"/>
</dbReference>
<dbReference type="Pfam" id="PF15273">
    <property type="entry name" value="NHS"/>
    <property type="match status" value="1"/>
</dbReference>
<name>NHSL3_MOUSE</name>
<organism>
    <name type="scientific">Mus musculus</name>
    <name type="common">Mouse</name>
    <dbReference type="NCBI Taxonomy" id="10090"/>
    <lineage>
        <taxon>Eukaryota</taxon>
        <taxon>Metazoa</taxon>
        <taxon>Chordata</taxon>
        <taxon>Craniata</taxon>
        <taxon>Vertebrata</taxon>
        <taxon>Euteleostomi</taxon>
        <taxon>Mammalia</taxon>
        <taxon>Eutheria</taxon>
        <taxon>Euarchontoglires</taxon>
        <taxon>Glires</taxon>
        <taxon>Rodentia</taxon>
        <taxon>Myomorpha</taxon>
        <taxon>Muroidea</taxon>
        <taxon>Muridae</taxon>
        <taxon>Murinae</taxon>
        <taxon>Mus</taxon>
        <taxon>Mus</taxon>
    </lineage>
</organism>
<proteinExistence type="evidence at protein level"/>
<keyword id="KW-0025">Alternative splicing</keyword>
<keyword id="KW-0488">Methylation</keyword>
<keyword id="KW-0597">Phosphoprotein</keyword>
<keyword id="KW-1185">Reference proteome</keyword>
<sequence length="1013" mass="104842">MVVFLGRHLPALLEVFKKGSAKAESDNRQGAGPSQGPGSVGDELQDNVFFPSGRPPHLEELHTQAQEGLRSLQHQERQKLSKGGWDHGDTQSIQSSQTGPDEDTISIYSQKSYMTESSTAEDALSVRSEMIQRRGSTFRPHDSFPKSGKSGRRRRERRSTVLGLPQHVQKELGLRNNREAPGTPQPPGSRDAVRIPTVDGRPGLALGTGVRVSLQALEAETEAGTDAEAVIQRHIDRVYHDDTLVGRSTGARPPPLTRPMSLAVPGLTGGAGSPEPLSPAMSISPQATYLSKLIPHAVLPPTVDVVALGRSSLRTLSRCSLLSASPASVRSLGRFSSASSPRPRSRNASSSSDNWSHSQSSETIVSDGSTLSSKGGSEGQPEGSVASNNVAPPPPGGSGRGSPSGGSTAETSDTASIRSSGQLSGRSVSLRKMKRPPPPPRRTYSLHQRGSAVPDGPLGLPPKPERKQQPQLPRPPTAGGSSGVGAVSCPPSSAGTWGSGLSPGGSRRPPRSPERTLSPSSGYSSQSGTPTLPPKGLAVAPASPGKAQPPKPDRVTSLRSPGASVSSSLTSLCSSSSDPTPLDRSGPQMSTPLSDRFVIPPHPKVPAPFSPPPSKSKSSNQAAPVLAAPAVAPGQVSTIDTSPASPSMPQTTLTPAQESPVASKDESPPPSPPPSYHPPPPPTKKPEVLEEAPPPPEAAVEILPDPSWPPPPPPAPEEQDLSMADFPPPEEVFFNAGPELGPLESCSSEAAVPPAASLSQTPPPAPPPSSGSEPLARLPQKDSVGKHSGAPREDSGTPLVTPSLLQMVRLRSVGASTGIPNPSPGSSAPQKPLRRALSGRASPVTAPSSGLHAAVRLKASSLAASESPASALPTGIPEAEPRSPQSPASKASFIFSKGTKKLQLERPVSPEAQADLQRNLVAELRSISEHRPPPQAQKKPSKAPPPVARKPSVGVPPPSPSLPRTESLTAPSTNGLPHAEDRTNGELAENGGVQLAATEKMGSPGSDPQKKLV</sequence>
<accession>A2A7S8</accession>
<accession>A2A7S9</accession>
<accession>Q3U356</accession>
<accession>Q3U437</accession>
<accession>Q3V3N0</accession>
<accession>Q6ZPN9</accession>
<accession>Q8K0K8</accession>
<feature type="chain" id="PRO_0000311247" description="NHS-like protein 3">
    <location>
        <begin position="1"/>
        <end position="1013"/>
    </location>
</feature>
<feature type="region of interest" description="Disordered" evidence="2">
    <location>
        <begin position="20"/>
        <end position="195"/>
    </location>
</feature>
<feature type="region of interest" description="Disordered" evidence="2">
    <location>
        <begin position="330"/>
        <end position="1013"/>
    </location>
</feature>
<feature type="compositionally biased region" description="Basic and acidic residues" evidence="2">
    <location>
        <begin position="73"/>
        <end position="89"/>
    </location>
</feature>
<feature type="compositionally biased region" description="Polar residues" evidence="2">
    <location>
        <begin position="90"/>
        <end position="99"/>
    </location>
</feature>
<feature type="compositionally biased region" description="Polar residues" evidence="2">
    <location>
        <begin position="106"/>
        <end position="120"/>
    </location>
</feature>
<feature type="compositionally biased region" description="Basic and acidic residues" evidence="2">
    <location>
        <begin position="168"/>
        <end position="178"/>
    </location>
</feature>
<feature type="compositionally biased region" description="Low complexity" evidence="2">
    <location>
        <begin position="336"/>
        <end position="361"/>
    </location>
</feature>
<feature type="compositionally biased region" description="Polar residues" evidence="2">
    <location>
        <begin position="362"/>
        <end position="375"/>
    </location>
</feature>
<feature type="compositionally biased region" description="Polar residues" evidence="2">
    <location>
        <begin position="408"/>
        <end position="427"/>
    </location>
</feature>
<feature type="compositionally biased region" description="Low complexity" evidence="2">
    <location>
        <begin position="484"/>
        <end position="493"/>
    </location>
</feature>
<feature type="compositionally biased region" description="Low complexity" evidence="2">
    <location>
        <begin position="515"/>
        <end position="530"/>
    </location>
</feature>
<feature type="compositionally biased region" description="Low complexity" evidence="2">
    <location>
        <begin position="564"/>
        <end position="577"/>
    </location>
</feature>
<feature type="compositionally biased region" description="Pro residues" evidence="2">
    <location>
        <begin position="600"/>
        <end position="614"/>
    </location>
</feature>
<feature type="compositionally biased region" description="Low complexity" evidence="2">
    <location>
        <begin position="615"/>
        <end position="633"/>
    </location>
</feature>
<feature type="compositionally biased region" description="Polar residues" evidence="2">
    <location>
        <begin position="635"/>
        <end position="657"/>
    </location>
</feature>
<feature type="compositionally biased region" description="Pro residues" evidence="2">
    <location>
        <begin position="668"/>
        <end position="683"/>
    </location>
</feature>
<feature type="compositionally biased region" description="Pro residues" evidence="2">
    <location>
        <begin position="706"/>
        <end position="716"/>
    </location>
</feature>
<feature type="compositionally biased region" description="Basic and acidic residues" evidence="2">
    <location>
        <begin position="779"/>
        <end position="795"/>
    </location>
</feature>
<feature type="compositionally biased region" description="Polar residues" evidence="2">
    <location>
        <begin position="814"/>
        <end position="829"/>
    </location>
</feature>
<feature type="compositionally biased region" description="Low complexity" evidence="2">
    <location>
        <begin position="859"/>
        <end position="873"/>
    </location>
</feature>
<feature type="compositionally biased region" description="Pro residues" evidence="2">
    <location>
        <begin position="942"/>
        <end position="961"/>
    </location>
</feature>
<feature type="compositionally biased region" description="Polar residues" evidence="2">
    <location>
        <begin position="964"/>
        <end position="975"/>
    </location>
</feature>
<feature type="modified residue" description="Phosphoserine" evidence="8">
    <location>
        <position position="92"/>
    </location>
</feature>
<feature type="modified residue" description="Phosphotyrosine" evidence="6">
    <location>
        <position position="108"/>
    </location>
</feature>
<feature type="modified residue" description="Phosphoserine" evidence="1">
    <location>
        <position position="136"/>
    </location>
</feature>
<feature type="modified residue" description="Phosphoserine" evidence="1">
    <location>
        <position position="143"/>
    </location>
</feature>
<feature type="modified residue" description="Phosphoserine" evidence="1">
    <location>
        <position position="159"/>
    </location>
</feature>
<feature type="modified residue" description="Phosphothreonine" evidence="1">
    <location>
        <position position="160"/>
    </location>
</feature>
<feature type="modified residue" description="Phosphoserine" evidence="8">
    <location>
        <position position="213"/>
    </location>
</feature>
<feature type="modified residue" description="Asymmetric dimethylarginine" evidence="9">
    <location>
        <position position="318"/>
    </location>
</feature>
<feature type="modified residue" description="Phosphoserine" evidence="1">
    <location>
        <position position="320"/>
    </location>
</feature>
<feature type="modified residue" description="Phosphoserine" evidence="8">
    <location>
        <position position="325"/>
    </location>
</feature>
<feature type="modified residue" description="Phosphoserine" evidence="8">
    <location>
        <position position="328"/>
    </location>
</feature>
<feature type="modified residue" description="Phosphoserine" evidence="1">
    <location>
        <position position="336"/>
    </location>
</feature>
<feature type="modified residue" description="Phosphoserine" evidence="1">
    <location>
        <position position="337"/>
    </location>
</feature>
<feature type="modified residue" description="Phosphoserine" evidence="1">
    <location>
        <position position="339"/>
    </location>
</feature>
<feature type="modified residue" description="Phosphoserine" evidence="1">
    <location>
        <position position="340"/>
    </location>
</feature>
<feature type="modified residue" description="Phosphoserine" evidence="1">
    <location>
        <position position="398"/>
    </location>
</feature>
<feature type="modified residue" description="Phosphoserine" evidence="7 8">
    <location>
        <position position="402"/>
    </location>
</feature>
<feature type="modified residue" description="Phosphoserine" evidence="8">
    <location>
        <position position="407"/>
    </location>
</feature>
<feature type="modified residue" description="Phosphothreonine" evidence="8">
    <location>
        <position position="529"/>
    </location>
</feature>
<feature type="modified residue" description="Phosphoserine" evidence="8">
    <location>
        <position position="543"/>
    </location>
</feature>
<feature type="modified residue" description="Phosphothreonine" evidence="1">
    <location>
        <position position="591"/>
    </location>
</feature>
<feature type="modified residue" description="Phosphoserine" evidence="7">
    <location>
        <position position="610"/>
    </location>
</feature>
<feature type="modified residue" description="Phosphoserine" evidence="1">
    <location>
        <position position="667"/>
    </location>
</feature>
<feature type="modified residue" description="Phosphoserine" evidence="1">
    <location>
        <position position="671"/>
    </location>
</feature>
<feature type="modified residue" description="Phosphoserine" evidence="8">
    <location>
        <position position="838"/>
    </location>
</feature>
<feature type="modified residue" description="Phosphoserine" evidence="8">
    <location>
        <position position="842"/>
    </location>
</feature>
<feature type="modified residue" description="Phosphoserine" evidence="1">
    <location>
        <position position="848"/>
    </location>
</feature>
<feature type="modified residue" description="Phosphoserine" evidence="7 8">
    <location>
        <position position="909"/>
    </location>
</feature>
<feature type="modified residue" description="Phosphoserine" evidence="8">
    <location>
        <position position="952"/>
    </location>
</feature>
<feature type="modified residue" description="Phosphoserine" evidence="8">
    <location>
        <position position="959"/>
    </location>
</feature>
<feature type="splice variant" id="VSP_029459" description="In isoform 3." evidence="4">
    <location>
        <begin position="1"/>
        <end position="113"/>
    </location>
</feature>
<feature type="splice variant" id="VSP_029460" description="In isoform 2." evidence="4">
    <original>MVVFLGRHLPALLEVFKK</original>
    <variation>MAARAPPAAPAADEPGSPGGPPRRKKSRSGLRRAFSWLRGKRRKKKAAGAEGAESTASRAKKADDKAKRAKGKSR</variation>
    <location>
        <begin position="1"/>
        <end position="18"/>
    </location>
</feature>
<feature type="splice variant" id="VSP_029461" description="In isoform 4." evidence="3">
    <original>MVVFLGRHLPALLEVFKK</original>
    <variation>MGNSHHKRKAPSGPRTRSFWRFGRSAKRPA</variation>
    <location>
        <begin position="1"/>
        <end position="18"/>
    </location>
</feature>
<feature type="sequence conflict" description="In Ref. 2; BAE20526." evidence="5" ref="2">
    <original>T</original>
    <variation>P</variation>
    <location>
        <position position="221"/>
    </location>
</feature>
<feature type="sequence conflict" description="In Ref. 2; BAE20526." evidence="5" ref="2">
    <original>I</original>
    <variation>L</variation>
    <location>
        <position position="231"/>
    </location>
</feature>
<feature type="modified residue" description="Phosphoserine" evidence="7 8">
    <location sequence="A2A7S8-2">
        <position position="17"/>
    </location>
</feature>